<comment type="function">
    <text evidence="6 8">Catalyzes the NADPH-dependent formation of L-aspartate 4-semialdehyde (L-ASA) by the reductive dephosphorylation of 4-phospho-L-aspartate (PubMed:26527262, PubMed:29608391). Mediates the second step in the biosynthesis of amino acids that derive from aspartate (the aspartate family of amino acids), including methioinine and threonine, the latter of which is a precursor to isoleucine (PubMed:26527262).</text>
</comment>
<comment type="catalytic activity">
    <reaction evidence="6 8">
        <text>L-aspartate 4-semialdehyde + phosphate + NADP(+) = 4-phospho-L-aspartate + NADPH + H(+)</text>
        <dbReference type="Rhea" id="RHEA:24284"/>
        <dbReference type="ChEBI" id="CHEBI:15378"/>
        <dbReference type="ChEBI" id="CHEBI:43474"/>
        <dbReference type="ChEBI" id="CHEBI:57535"/>
        <dbReference type="ChEBI" id="CHEBI:57783"/>
        <dbReference type="ChEBI" id="CHEBI:58349"/>
        <dbReference type="ChEBI" id="CHEBI:537519"/>
        <dbReference type="EC" id="1.2.1.11"/>
    </reaction>
    <physiologicalReaction direction="right-to-left" evidence="6 8">
        <dbReference type="Rhea" id="RHEA:24286"/>
    </physiologicalReaction>
</comment>
<comment type="activity regulation">
    <text evidence="8">Inhibited by the competitive inhibitor 1,4-benzoquinone and derivates such as 2-chloro-3-methoxy-1,4-naphthoquinone, 2,3-dichloro-1,4-naphthoquinone, 2-chloro-1,4-naphthoquinone, 2-bromo-1,4-naphthoquinone and 2,3-dichloro-5,8-dihydroxy-1,4-naphthoquinone.</text>
</comment>
<comment type="biophysicochemical properties">
    <kinetics>
        <KM evidence="6">0.34 mM for L-aspartate 4-semialdehyde in the reverse direction (at 25 degrees Celsius and at pH 8.6)</KM>
        <text evidence="6">kcat is 10.2 sec(-1) with L-aspartate 4-semialdehyde as substrate (at 25 degrees Celsius and at pH 8.6).</text>
    </kinetics>
</comment>
<comment type="pathway">
    <text evidence="6">Amino-acid biosynthesis; L-methionine biosynthesis via de novo pathway; L-homoserine from L-aspartate: step 2/3.</text>
</comment>
<comment type="pathway">
    <text evidence="6">Amino-acid biosynthesis; L-threonine biosynthesis; L-threonine from L-aspartate: step 2/5.</text>
</comment>
<comment type="subunit">
    <text evidence="6 7">Homotetramer; dimer of dimers.</text>
</comment>
<comment type="subcellular location">
    <subcellularLocation>
        <location evidence="3">Cytoplasm</location>
        <location evidence="3">Cytosol</location>
    </subcellularLocation>
    <subcellularLocation>
        <location evidence="3">Nucleus</location>
    </subcellularLocation>
</comment>
<comment type="similarity">
    <text evidence="9">Belongs to the aspartate-semialdehyde dehydrogenase family.</text>
</comment>
<keyword id="KW-0002">3D-structure</keyword>
<keyword id="KW-0028">Amino-acid biosynthesis</keyword>
<keyword id="KW-0963">Cytoplasm</keyword>
<keyword id="KW-0486">Methionine biosynthesis</keyword>
<keyword id="KW-0521">NADP</keyword>
<keyword id="KW-0539">Nucleus</keyword>
<keyword id="KW-0560">Oxidoreductase</keyword>
<keyword id="KW-1185">Reference proteome</keyword>
<keyword id="KW-0791">Threonine biosynthesis</keyword>
<dbReference type="EC" id="1.2.1.11" evidence="6 8"/>
<dbReference type="EMBL" id="AE017341">
    <property type="protein sequence ID" value="AAW40826.1"/>
    <property type="molecule type" value="Genomic_DNA"/>
</dbReference>
<dbReference type="RefSeq" id="XP_566645.1">
    <property type="nucleotide sequence ID" value="XM_566645.2"/>
</dbReference>
<dbReference type="PDB" id="5CEF">
    <property type="method" value="X-ray"/>
    <property type="resolution" value="2.60 A"/>
    <property type="chains" value="A/B/C/D=1-365"/>
</dbReference>
<dbReference type="PDBsum" id="5CEF"/>
<dbReference type="SMR" id="Q5KPK7"/>
<dbReference type="FunCoup" id="Q5KPK7">
    <property type="interactions" value="209"/>
</dbReference>
<dbReference type="STRING" id="214684.Q5KPK7"/>
<dbReference type="PaxDb" id="214684-Q5KPK7"/>
<dbReference type="EnsemblFungi" id="AAW40826">
    <property type="protein sequence ID" value="AAW40826"/>
    <property type="gene ID" value="CNA02450"/>
</dbReference>
<dbReference type="GeneID" id="3253595"/>
<dbReference type="KEGG" id="cne:CNA02450"/>
<dbReference type="VEuPathDB" id="FungiDB:CNA02450"/>
<dbReference type="eggNOG" id="KOG4777">
    <property type="taxonomic scope" value="Eukaryota"/>
</dbReference>
<dbReference type="HOGENOM" id="CLU_049966_1_0_1"/>
<dbReference type="InParanoid" id="Q5KPK7"/>
<dbReference type="OMA" id="CEEEMKM"/>
<dbReference type="OrthoDB" id="1894490at2759"/>
<dbReference type="BRENDA" id="1.2.1.11">
    <property type="organism ID" value="11910"/>
</dbReference>
<dbReference type="UniPathway" id="UPA00050">
    <property type="reaction ID" value="UER00463"/>
</dbReference>
<dbReference type="UniPathway" id="UPA00051">
    <property type="reaction ID" value="UER00464"/>
</dbReference>
<dbReference type="Proteomes" id="UP000002149">
    <property type="component" value="Chromosome 1"/>
</dbReference>
<dbReference type="GO" id="GO:0005829">
    <property type="term" value="C:cytosol"/>
    <property type="evidence" value="ECO:0007669"/>
    <property type="project" value="UniProtKB-SubCell"/>
</dbReference>
<dbReference type="GO" id="GO:0005634">
    <property type="term" value="C:nucleus"/>
    <property type="evidence" value="ECO:0007669"/>
    <property type="project" value="UniProtKB-SubCell"/>
</dbReference>
<dbReference type="GO" id="GO:0004073">
    <property type="term" value="F:aspartate-semialdehyde dehydrogenase activity"/>
    <property type="evidence" value="ECO:0000314"/>
    <property type="project" value="UniProtKB"/>
</dbReference>
<dbReference type="GO" id="GO:0051287">
    <property type="term" value="F:NAD binding"/>
    <property type="evidence" value="ECO:0007669"/>
    <property type="project" value="InterPro"/>
</dbReference>
<dbReference type="GO" id="GO:0050661">
    <property type="term" value="F:NADP binding"/>
    <property type="evidence" value="ECO:0007669"/>
    <property type="project" value="InterPro"/>
</dbReference>
<dbReference type="GO" id="GO:0046983">
    <property type="term" value="F:protein dimerization activity"/>
    <property type="evidence" value="ECO:0007669"/>
    <property type="project" value="InterPro"/>
</dbReference>
<dbReference type="GO" id="GO:0071266">
    <property type="term" value="P:'de novo' L-methionine biosynthetic process"/>
    <property type="evidence" value="ECO:0000314"/>
    <property type="project" value="UniProtKB"/>
</dbReference>
<dbReference type="GO" id="GO:0009090">
    <property type="term" value="P:homoserine biosynthetic process"/>
    <property type="evidence" value="ECO:0007669"/>
    <property type="project" value="EnsemblFungi"/>
</dbReference>
<dbReference type="GO" id="GO:0009089">
    <property type="term" value="P:lysine biosynthetic process via diaminopimelate"/>
    <property type="evidence" value="ECO:0007669"/>
    <property type="project" value="UniProtKB-UniPathway"/>
</dbReference>
<dbReference type="GO" id="GO:0009086">
    <property type="term" value="P:methionine biosynthetic process"/>
    <property type="evidence" value="ECO:0000318"/>
    <property type="project" value="GO_Central"/>
</dbReference>
<dbReference type="GO" id="GO:0009088">
    <property type="term" value="P:threonine biosynthetic process"/>
    <property type="evidence" value="ECO:0000314"/>
    <property type="project" value="UniProtKB"/>
</dbReference>
<dbReference type="CDD" id="cd18130">
    <property type="entry name" value="ASADH_C_arch_fung_like"/>
    <property type="match status" value="1"/>
</dbReference>
<dbReference type="CDD" id="cd02315">
    <property type="entry name" value="ScASADH_like_N"/>
    <property type="match status" value="1"/>
</dbReference>
<dbReference type="FunFam" id="3.40.50.720:FF:000200">
    <property type="entry name" value="Aspartate-semialdehyde dehydrogenase"/>
    <property type="match status" value="1"/>
</dbReference>
<dbReference type="FunFam" id="3.30.360.10:FF:000016">
    <property type="entry name" value="Probable aspartate-semialdehyde dehydrogenase"/>
    <property type="match status" value="1"/>
</dbReference>
<dbReference type="Gene3D" id="3.30.360.10">
    <property type="entry name" value="Dihydrodipicolinate Reductase, domain 2"/>
    <property type="match status" value="1"/>
</dbReference>
<dbReference type="Gene3D" id="3.40.50.720">
    <property type="entry name" value="NAD(P)-binding Rossmann-like Domain"/>
    <property type="match status" value="1"/>
</dbReference>
<dbReference type="InterPro" id="IPR051823">
    <property type="entry name" value="ASADH-related"/>
</dbReference>
<dbReference type="InterPro" id="IPR000319">
    <property type="entry name" value="Asp-semialdehyde_DH_CS"/>
</dbReference>
<dbReference type="InterPro" id="IPR005676">
    <property type="entry name" value="Asp_semi-ald_DH_pep-lack"/>
</dbReference>
<dbReference type="InterPro" id="IPR036291">
    <property type="entry name" value="NAD(P)-bd_dom_sf"/>
</dbReference>
<dbReference type="InterPro" id="IPR000534">
    <property type="entry name" value="Semialdehyde_DH_NAD-bd"/>
</dbReference>
<dbReference type="InterPro" id="IPR012280">
    <property type="entry name" value="Semialdhyde_DH_dimer_dom"/>
</dbReference>
<dbReference type="NCBIfam" id="TIGR00978">
    <property type="entry name" value="asd_EA"/>
    <property type="match status" value="1"/>
</dbReference>
<dbReference type="NCBIfam" id="NF006416">
    <property type="entry name" value="PRK08664.1"/>
    <property type="match status" value="1"/>
</dbReference>
<dbReference type="PANTHER" id="PTHR46718">
    <property type="entry name" value="ASPARTATE-SEMIALDEHYDE DEHYDROGENASE"/>
    <property type="match status" value="1"/>
</dbReference>
<dbReference type="PANTHER" id="PTHR46718:SF1">
    <property type="entry name" value="ASPARTATE-SEMIALDEHYDE DEHYDROGENASE"/>
    <property type="match status" value="1"/>
</dbReference>
<dbReference type="Pfam" id="PF01118">
    <property type="entry name" value="Semialdhyde_dh"/>
    <property type="match status" value="1"/>
</dbReference>
<dbReference type="Pfam" id="PF02774">
    <property type="entry name" value="Semialdhyde_dhC"/>
    <property type="match status" value="1"/>
</dbReference>
<dbReference type="PIRSF" id="PIRSF000148">
    <property type="entry name" value="ASA_dh"/>
    <property type="match status" value="1"/>
</dbReference>
<dbReference type="SMART" id="SM00859">
    <property type="entry name" value="Semialdhyde_dh"/>
    <property type="match status" value="1"/>
</dbReference>
<dbReference type="SUPFAM" id="SSF55347">
    <property type="entry name" value="Glyceraldehyde-3-phosphate dehydrogenase-like, C-terminal domain"/>
    <property type="match status" value="1"/>
</dbReference>
<dbReference type="SUPFAM" id="SSF51735">
    <property type="entry name" value="NAD(P)-binding Rossmann-fold domains"/>
    <property type="match status" value="1"/>
</dbReference>
<dbReference type="PROSITE" id="PS01103">
    <property type="entry name" value="ASD"/>
    <property type="match status" value="1"/>
</dbReference>
<evidence type="ECO:0000250" key="1">
    <source>
        <dbReference type="UniProtKB" id="A0A080WMA9"/>
    </source>
</evidence>
<evidence type="ECO:0000250" key="2">
    <source>
        <dbReference type="UniProtKB" id="A0A179UL48"/>
    </source>
</evidence>
<evidence type="ECO:0000250" key="3">
    <source>
        <dbReference type="UniProtKB" id="P13663"/>
    </source>
</evidence>
<evidence type="ECO:0000250" key="4">
    <source>
        <dbReference type="UniProtKB" id="Q5ALM0"/>
    </source>
</evidence>
<evidence type="ECO:0000255" key="5">
    <source>
        <dbReference type="PIRSR" id="PIRSR000148-1"/>
    </source>
</evidence>
<evidence type="ECO:0000269" key="6">
    <source>
    </source>
</evidence>
<evidence type="ECO:0000269" key="7">
    <source>
    </source>
</evidence>
<evidence type="ECO:0000269" key="8">
    <source>
    </source>
</evidence>
<evidence type="ECO:0000305" key="9"/>
<evidence type="ECO:0000312" key="10">
    <source>
        <dbReference type="EMBL" id="AAW40826.1"/>
    </source>
</evidence>
<evidence type="ECO:0000312" key="11">
    <source>
        <dbReference type="Proteomes" id="UP000002149"/>
    </source>
</evidence>
<evidence type="ECO:0007744" key="12">
    <source>
        <dbReference type="PDB" id="5CEF"/>
    </source>
</evidence>
<evidence type="ECO:0007829" key="13">
    <source>
        <dbReference type="PDB" id="5CEF"/>
    </source>
</evidence>
<gene>
    <name evidence="10" type="ordered locus">CNA02450</name>
</gene>
<proteinExistence type="evidence at protein level"/>
<accession>Q5KPK7</accession>
<protein>
    <recommendedName>
        <fullName evidence="9">Aspartate-semialdehyde dehydrogenase</fullName>
        <ecNumber evidence="6 8">1.2.1.11</ecNumber>
    </recommendedName>
</protein>
<name>DHAS_CRYNJ</name>
<feature type="chain" id="PRO_0000461595" description="Aspartate-semialdehyde dehydrogenase">
    <location>
        <begin position="1"/>
        <end position="365"/>
    </location>
</feature>
<feature type="active site" description="Acyl-thioester intermediate" evidence="5">
    <location>
        <position position="156"/>
    </location>
</feature>
<feature type="active site" description="Proton acceptor" evidence="5">
    <location>
        <position position="255"/>
    </location>
</feature>
<feature type="binding site" evidence="1">
    <location>
        <position position="15"/>
    </location>
    <ligand>
        <name>NADP(+)</name>
        <dbReference type="ChEBI" id="CHEBI:58349"/>
    </ligand>
</feature>
<feature type="binding site" evidence="4">
    <location>
        <position position="16"/>
    </location>
    <ligand>
        <name>NADP(+)</name>
        <dbReference type="ChEBI" id="CHEBI:58349"/>
    </ligand>
</feature>
<feature type="binding site" evidence="4">
    <location>
        <position position="17"/>
    </location>
    <ligand>
        <name>NADP(+)</name>
        <dbReference type="ChEBI" id="CHEBI:58349"/>
    </ligand>
</feature>
<feature type="binding site" evidence="2">
    <location>
        <position position="18"/>
    </location>
    <ligand>
        <name>NADP(+)</name>
        <dbReference type="ChEBI" id="CHEBI:58349"/>
    </ligand>
</feature>
<feature type="binding site" evidence="1">
    <location>
        <position position="40"/>
    </location>
    <ligand>
        <name>NADP(+)</name>
        <dbReference type="ChEBI" id="CHEBI:58349"/>
    </ligand>
</feature>
<feature type="binding site" evidence="4">
    <location>
        <position position="43"/>
    </location>
    <ligand>
        <name>NADP(+)</name>
        <dbReference type="ChEBI" id="CHEBI:58349"/>
    </ligand>
</feature>
<feature type="binding site" evidence="1">
    <location>
        <position position="89"/>
    </location>
    <ligand>
        <name>NADP(+)</name>
        <dbReference type="ChEBI" id="CHEBI:58349"/>
    </ligand>
</feature>
<feature type="binding site" evidence="1">
    <location>
        <position position="90"/>
    </location>
    <ligand>
        <name>NADP(+)</name>
        <dbReference type="ChEBI" id="CHEBI:58349"/>
    </ligand>
</feature>
<feature type="binding site" evidence="1">
    <location>
        <position position="188"/>
    </location>
    <ligand>
        <name>NADP(+)</name>
        <dbReference type="ChEBI" id="CHEBI:58349"/>
    </ligand>
</feature>
<feature type="binding site" evidence="2">
    <location>
        <position position="342"/>
    </location>
    <ligand>
        <name>NADP(+)</name>
        <dbReference type="ChEBI" id="CHEBI:58349"/>
    </ligand>
</feature>
<feature type="strand" evidence="13">
    <location>
        <begin position="7"/>
        <end position="13"/>
    </location>
</feature>
<feature type="helix" evidence="13">
    <location>
        <begin position="17"/>
        <end position="27"/>
    </location>
</feature>
<feature type="strand" evidence="13">
    <location>
        <begin position="30"/>
        <end position="38"/>
    </location>
</feature>
<feature type="turn" evidence="13">
    <location>
        <begin position="41"/>
        <end position="45"/>
    </location>
</feature>
<feature type="helix" evidence="13">
    <location>
        <begin position="48"/>
        <end position="51"/>
    </location>
</feature>
<feature type="strand" evidence="13">
    <location>
        <begin position="56"/>
        <end position="58"/>
    </location>
</feature>
<feature type="helix" evidence="13">
    <location>
        <begin position="62"/>
        <end position="65"/>
    </location>
</feature>
<feature type="strand" evidence="13">
    <location>
        <begin position="68"/>
        <end position="70"/>
    </location>
</feature>
<feature type="helix" evidence="13">
    <location>
        <begin position="79"/>
        <end position="81"/>
    </location>
</feature>
<feature type="strand" evidence="13">
    <location>
        <begin position="83"/>
        <end position="87"/>
    </location>
</feature>
<feature type="helix" evidence="13">
    <location>
        <begin position="91"/>
        <end position="103"/>
    </location>
</feature>
<feature type="strand" evidence="13">
    <location>
        <begin position="107"/>
        <end position="110"/>
    </location>
</feature>
<feature type="turn" evidence="13">
    <location>
        <begin position="114"/>
        <end position="117"/>
    </location>
</feature>
<feature type="turn" evidence="13">
    <location>
        <begin position="126"/>
        <end position="128"/>
    </location>
</feature>
<feature type="helix" evidence="13">
    <location>
        <begin position="130"/>
        <end position="135"/>
    </location>
</feature>
<feature type="helix" evidence="13">
    <location>
        <begin position="136"/>
        <end position="142"/>
    </location>
</feature>
<feature type="strand" evidence="13">
    <location>
        <begin position="149"/>
        <end position="153"/>
    </location>
</feature>
<feature type="helix" evidence="13">
    <location>
        <begin position="156"/>
        <end position="172"/>
    </location>
</feature>
<feature type="strand" evidence="13">
    <location>
        <begin position="175"/>
        <end position="184"/>
    </location>
</feature>
<feature type="helix" evidence="13">
    <location>
        <begin position="196"/>
        <end position="199"/>
    </location>
</feature>
<feature type="helix" evidence="13">
    <location>
        <begin position="210"/>
        <end position="222"/>
    </location>
</feature>
<feature type="strand" evidence="13">
    <location>
        <begin position="241"/>
        <end position="248"/>
    </location>
</feature>
<feature type="strand" evidence="13">
    <location>
        <begin position="255"/>
        <end position="267"/>
    </location>
</feature>
<feature type="helix" evidence="13">
    <location>
        <begin position="271"/>
        <end position="280"/>
    </location>
</feature>
<feature type="helix" evidence="13">
    <location>
        <begin position="284"/>
        <end position="287"/>
    </location>
</feature>
<feature type="strand" evidence="13">
    <location>
        <begin position="297"/>
        <end position="300"/>
    </location>
</feature>
<feature type="turn" evidence="13">
    <location>
        <begin position="309"/>
        <end position="311"/>
    </location>
</feature>
<feature type="strand" evidence="13">
    <location>
        <begin position="312"/>
        <end position="314"/>
    </location>
</feature>
<feature type="helix" evidence="13">
    <location>
        <begin position="316"/>
        <end position="318"/>
    </location>
</feature>
<feature type="strand" evidence="13">
    <location>
        <begin position="321"/>
        <end position="328"/>
    </location>
</feature>
<feature type="strand" evidence="13">
    <location>
        <begin position="330"/>
        <end position="340"/>
    </location>
</feature>
<feature type="turn" evidence="13">
    <location>
        <begin position="342"/>
        <end position="345"/>
    </location>
</feature>
<feature type="helix" evidence="13">
    <location>
        <begin position="347"/>
        <end position="360"/>
    </location>
</feature>
<sequence length="365" mass="39014">MSPRPQIKVGVLGATGTVGQRFIELLAAHPYFALHALGASSRSAGQQYARVVRWKLPSPIPDAVRHMVVHECRPDAPGFAECGVVFSGLDADVAGDIENAFRAADLVVYSNAKNYRRDPLCPLIVPLVNPSHLSIIPYQREQLGLKKGYIVTNANCSTTGIVVPLAALEKAFGPLDTVIVTTLQAISGAGYPGVSSLDIMDNVVPLISGEEDKIEWETNKILGGVTPDNKAFDLHAPKQINVSATCTRVPVIDGHTGCVSVKFARSPPPSVAEVENAFREYTCDAQHLGVPSAPAQAIVVHDAPDRPQPRLDKNLHNGACVSVGRIRECPVFDIKFVCLIDNVRLGAATSSIINAEIAVEKGLIQ</sequence>
<reference evidence="11" key="1">
    <citation type="journal article" date="2005" name="Science">
        <title>The genome of the basidiomycetous yeast and human pathogen Cryptococcus neoformans.</title>
        <authorList>
            <person name="Loftus B.J."/>
            <person name="Fung E."/>
            <person name="Roncaglia P."/>
            <person name="Rowley D."/>
            <person name="Amedeo P."/>
            <person name="Bruno D."/>
            <person name="Vamathevan J."/>
            <person name="Miranda M."/>
            <person name="Anderson I.J."/>
            <person name="Fraser J.A."/>
            <person name="Allen J.E."/>
            <person name="Bosdet I.E."/>
            <person name="Brent M.R."/>
            <person name="Chiu R."/>
            <person name="Doering T.L."/>
            <person name="Donlin M.J."/>
            <person name="D'Souza C.A."/>
            <person name="Fox D.S."/>
            <person name="Grinberg V."/>
            <person name="Fu J."/>
            <person name="Fukushima M."/>
            <person name="Haas B.J."/>
            <person name="Huang J.C."/>
            <person name="Janbon G."/>
            <person name="Jones S.J.M."/>
            <person name="Koo H.L."/>
            <person name="Krzywinski M.I."/>
            <person name="Kwon-Chung K.J."/>
            <person name="Lengeler K.B."/>
            <person name="Maiti R."/>
            <person name="Marra M.A."/>
            <person name="Marra R.E."/>
            <person name="Mathewson C.A."/>
            <person name="Mitchell T.G."/>
            <person name="Pertea M."/>
            <person name="Riggs F.R."/>
            <person name="Salzberg S.L."/>
            <person name="Schein J.E."/>
            <person name="Shvartsbeyn A."/>
            <person name="Shin H."/>
            <person name="Shumway M."/>
            <person name="Specht C.A."/>
            <person name="Suh B.B."/>
            <person name="Tenney A."/>
            <person name="Utterback T.R."/>
            <person name="Wickes B.L."/>
            <person name="Wortman J.R."/>
            <person name="Wye N.H."/>
            <person name="Kronstad J.W."/>
            <person name="Lodge J.K."/>
            <person name="Heitman J."/>
            <person name="Davis R.W."/>
            <person name="Fraser C.M."/>
            <person name="Hyman R.W."/>
        </authorList>
    </citation>
    <scope>NUCLEOTIDE SEQUENCE [LARGE SCALE GENOMIC DNA]</scope>
    <source>
        <strain evidence="11">JEC21 / ATCC MYA-565</strain>
    </source>
</reference>
<reference evidence="9" key="2">
    <citation type="journal article" date="2016" name="Sci. Rep.">
        <title>Structural Insights into the Tetrameric State of Aspartate-beta-semialdehyde Dehydrogenases from Fungal Species.</title>
        <authorList>
            <person name="Li Q."/>
            <person name="Mu Z."/>
            <person name="Zhao R."/>
            <person name="Dahal G."/>
            <person name="Viola R.E."/>
            <person name="Liu T."/>
            <person name="Jin Q."/>
            <person name="Cui S."/>
        </authorList>
    </citation>
    <scope>SUBUNIT</scope>
</reference>
<reference evidence="9" key="3">
    <citation type="journal article" date="2018" name="SLAS Discovery">
        <title>A Fragment Library Screening Approach to Identify Selective Inhibitors against an Essential Fungal Enzyme.</title>
        <authorList>
            <person name="Dahal G.P."/>
            <person name="Viola R.E."/>
        </authorList>
    </citation>
    <scope>FUNCTION</scope>
    <scope>CATALYTIC ACTIVITY</scope>
    <scope>ACTIVITY REGULATION</scope>
</reference>
<reference evidence="12" key="4">
    <citation type="journal article" date="2015" name="Acta Crystallogr. F Struct. Biol. Commun.">
        <title>Structure of a fungal form of aspartate semialdehyde dehydrogenase from Cryptococcus neoformans.</title>
        <authorList>
            <person name="Dahal G."/>
            <person name="Viola R.E."/>
        </authorList>
    </citation>
    <scope>X-RAY CRYSTALLOGRAPHY (2.60 ANGSTROMS)</scope>
    <scope>FUNCTION</scope>
    <scope>CATALYTIC ACTIVITY</scope>
    <scope>BIOPHYSICOCHEMICAL PROPERTIES</scope>
    <scope>PATHWAY</scope>
    <scope>SUBUNIT</scope>
</reference>
<organism evidence="11">
    <name type="scientific">Cryptococcus neoformans var. neoformans serotype D (strain JEC21 / ATCC MYA-565)</name>
    <name type="common">Filobasidiella neoformans</name>
    <dbReference type="NCBI Taxonomy" id="214684"/>
    <lineage>
        <taxon>Eukaryota</taxon>
        <taxon>Fungi</taxon>
        <taxon>Dikarya</taxon>
        <taxon>Basidiomycota</taxon>
        <taxon>Agaricomycotina</taxon>
        <taxon>Tremellomycetes</taxon>
        <taxon>Tremellales</taxon>
        <taxon>Cryptococcaceae</taxon>
        <taxon>Cryptococcus</taxon>
        <taxon>Cryptococcus neoformans species complex</taxon>
    </lineage>
</organism>